<protein>
    <recommendedName>
        <fullName>UPF0193 protein EVG1 homolog</fullName>
    </recommendedName>
</protein>
<gene>
    <name type="ORF">CG5280</name>
</gene>
<comment type="similarity">
    <text evidence="2">Belongs to the UPF0193 (EVG1) family.</text>
</comment>
<sequence length="250" mass="28564">MSRHRFNNVQIKALPGGLMAHHEPDADGGQPGSQKLPMWPSERIPPGGAGAFHSAKVQYSKETADLIRLLVKESKMSMLVRKQIDESLRNGEPLPLPEPPRPNTNNDPDKETLAILDRARNAKRKNLRQIEASGAYKQSYYRPPADNRMHGEKAKSQLQFTMAGTHLPDPAIKPRRRPREEQLVTEEDLINELLDQINERAEWLTEMESMGQGKKYRPEIRDQIAERLRRIQALESKMKMKSNGGFRFVD</sequence>
<dbReference type="EMBL" id="AE014296">
    <property type="protein sequence ID" value="AAF50335.1"/>
    <property type="molecule type" value="Genomic_DNA"/>
</dbReference>
<dbReference type="RefSeq" id="NP_648278.1">
    <property type="nucleotide sequence ID" value="NM_140021.2"/>
</dbReference>
<dbReference type="SMR" id="Q9VSS7"/>
<dbReference type="BioGRID" id="64437">
    <property type="interactions" value="9"/>
</dbReference>
<dbReference type="DIP" id="DIP-18274N"/>
<dbReference type="FunCoup" id="Q9VSS7">
    <property type="interactions" value="2"/>
</dbReference>
<dbReference type="IntAct" id="Q9VSS7">
    <property type="interactions" value="5"/>
</dbReference>
<dbReference type="STRING" id="7227.FBpp0076279"/>
<dbReference type="PaxDb" id="7227-FBpp0076279"/>
<dbReference type="EnsemblMetazoa" id="FBtr0076552">
    <property type="protein sequence ID" value="FBpp0076279"/>
    <property type="gene ID" value="FBgn0035952"/>
</dbReference>
<dbReference type="GeneID" id="39033"/>
<dbReference type="KEGG" id="dme:Dmel_CG5280"/>
<dbReference type="UCSC" id="CG5280-RA">
    <property type="organism name" value="d. melanogaster"/>
</dbReference>
<dbReference type="AGR" id="FB:FBgn0035952"/>
<dbReference type="FlyBase" id="FBgn0035952">
    <property type="gene designation" value="CG5280"/>
</dbReference>
<dbReference type="VEuPathDB" id="VectorBase:FBgn0035952"/>
<dbReference type="eggNOG" id="ENOG502S8IZ">
    <property type="taxonomic scope" value="Eukaryota"/>
</dbReference>
<dbReference type="GeneTree" id="ENSGT00390000010231"/>
<dbReference type="HOGENOM" id="CLU_081328_1_0_1"/>
<dbReference type="InParanoid" id="Q9VSS7"/>
<dbReference type="OMA" id="MMAYGKD"/>
<dbReference type="OrthoDB" id="10262032at2759"/>
<dbReference type="PhylomeDB" id="Q9VSS7"/>
<dbReference type="BioGRID-ORCS" id="39033">
    <property type="hits" value="0 hits in 1 CRISPR screen"/>
</dbReference>
<dbReference type="GenomeRNAi" id="39033"/>
<dbReference type="PRO" id="PR:Q9VSS7"/>
<dbReference type="Proteomes" id="UP000000803">
    <property type="component" value="Chromosome 3L"/>
</dbReference>
<dbReference type="Bgee" id="FBgn0035952">
    <property type="expression patterns" value="Expressed in early elongation stage spermatid (Drosophila) in testis and 21 other cell types or tissues"/>
</dbReference>
<dbReference type="ExpressionAtlas" id="Q9VSS7">
    <property type="expression patterns" value="baseline and differential"/>
</dbReference>
<dbReference type="InterPro" id="IPR007914">
    <property type="entry name" value="UPF0193"/>
</dbReference>
<dbReference type="PANTHER" id="PTHR28348">
    <property type="entry name" value="UPF0193 PROTEIN EVG1"/>
    <property type="match status" value="1"/>
</dbReference>
<dbReference type="PANTHER" id="PTHR28348:SF1">
    <property type="entry name" value="UPF0193 PROTEIN EVG1"/>
    <property type="match status" value="1"/>
</dbReference>
<dbReference type="Pfam" id="PF05250">
    <property type="entry name" value="UPF0193"/>
    <property type="match status" value="1"/>
</dbReference>
<accession>Q9VSS7</accession>
<name>EVG1_DROME</name>
<evidence type="ECO:0000256" key="1">
    <source>
        <dbReference type="SAM" id="MobiDB-lite"/>
    </source>
</evidence>
<evidence type="ECO:0000305" key="2"/>
<feature type="chain" id="PRO_0000221091" description="UPF0193 protein EVG1 homolog">
    <location>
        <begin position="1"/>
        <end position="250"/>
    </location>
</feature>
<feature type="region of interest" description="Disordered" evidence="1">
    <location>
        <begin position="86"/>
        <end position="110"/>
    </location>
</feature>
<reference key="1">
    <citation type="journal article" date="2000" name="Science">
        <title>The genome sequence of Drosophila melanogaster.</title>
        <authorList>
            <person name="Adams M.D."/>
            <person name="Celniker S.E."/>
            <person name="Holt R.A."/>
            <person name="Evans C.A."/>
            <person name="Gocayne J.D."/>
            <person name="Amanatides P.G."/>
            <person name="Scherer S.E."/>
            <person name="Li P.W."/>
            <person name="Hoskins R.A."/>
            <person name="Galle R.F."/>
            <person name="George R.A."/>
            <person name="Lewis S.E."/>
            <person name="Richards S."/>
            <person name="Ashburner M."/>
            <person name="Henderson S.N."/>
            <person name="Sutton G.G."/>
            <person name="Wortman J.R."/>
            <person name="Yandell M.D."/>
            <person name="Zhang Q."/>
            <person name="Chen L.X."/>
            <person name="Brandon R.C."/>
            <person name="Rogers Y.-H.C."/>
            <person name="Blazej R.G."/>
            <person name="Champe M."/>
            <person name="Pfeiffer B.D."/>
            <person name="Wan K.H."/>
            <person name="Doyle C."/>
            <person name="Baxter E.G."/>
            <person name="Helt G."/>
            <person name="Nelson C.R."/>
            <person name="Miklos G.L.G."/>
            <person name="Abril J.F."/>
            <person name="Agbayani A."/>
            <person name="An H.-J."/>
            <person name="Andrews-Pfannkoch C."/>
            <person name="Baldwin D."/>
            <person name="Ballew R.M."/>
            <person name="Basu A."/>
            <person name="Baxendale J."/>
            <person name="Bayraktaroglu L."/>
            <person name="Beasley E.M."/>
            <person name="Beeson K.Y."/>
            <person name="Benos P.V."/>
            <person name="Berman B.P."/>
            <person name="Bhandari D."/>
            <person name="Bolshakov S."/>
            <person name="Borkova D."/>
            <person name="Botchan M.R."/>
            <person name="Bouck J."/>
            <person name="Brokstein P."/>
            <person name="Brottier P."/>
            <person name="Burtis K.C."/>
            <person name="Busam D.A."/>
            <person name="Butler H."/>
            <person name="Cadieu E."/>
            <person name="Center A."/>
            <person name="Chandra I."/>
            <person name="Cherry J.M."/>
            <person name="Cawley S."/>
            <person name="Dahlke C."/>
            <person name="Davenport L.B."/>
            <person name="Davies P."/>
            <person name="de Pablos B."/>
            <person name="Delcher A."/>
            <person name="Deng Z."/>
            <person name="Mays A.D."/>
            <person name="Dew I."/>
            <person name="Dietz S.M."/>
            <person name="Dodson K."/>
            <person name="Doup L.E."/>
            <person name="Downes M."/>
            <person name="Dugan-Rocha S."/>
            <person name="Dunkov B.C."/>
            <person name="Dunn P."/>
            <person name="Durbin K.J."/>
            <person name="Evangelista C.C."/>
            <person name="Ferraz C."/>
            <person name="Ferriera S."/>
            <person name="Fleischmann W."/>
            <person name="Fosler C."/>
            <person name="Gabrielian A.E."/>
            <person name="Garg N.S."/>
            <person name="Gelbart W.M."/>
            <person name="Glasser K."/>
            <person name="Glodek A."/>
            <person name="Gong F."/>
            <person name="Gorrell J.H."/>
            <person name="Gu Z."/>
            <person name="Guan P."/>
            <person name="Harris M."/>
            <person name="Harris N.L."/>
            <person name="Harvey D.A."/>
            <person name="Heiman T.J."/>
            <person name="Hernandez J.R."/>
            <person name="Houck J."/>
            <person name="Hostin D."/>
            <person name="Houston K.A."/>
            <person name="Howland T.J."/>
            <person name="Wei M.-H."/>
            <person name="Ibegwam C."/>
            <person name="Jalali M."/>
            <person name="Kalush F."/>
            <person name="Karpen G.H."/>
            <person name="Ke Z."/>
            <person name="Kennison J.A."/>
            <person name="Ketchum K.A."/>
            <person name="Kimmel B.E."/>
            <person name="Kodira C.D."/>
            <person name="Kraft C.L."/>
            <person name="Kravitz S."/>
            <person name="Kulp D."/>
            <person name="Lai Z."/>
            <person name="Lasko P."/>
            <person name="Lei Y."/>
            <person name="Levitsky A.A."/>
            <person name="Li J.H."/>
            <person name="Li Z."/>
            <person name="Liang Y."/>
            <person name="Lin X."/>
            <person name="Liu X."/>
            <person name="Mattei B."/>
            <person name="McIntosh T.C."/>
            <person name="McLeod M.P."/>
            <person name="McPherson D."/>
            <person name="Merkulov G."/>
            <person name="Milshina N.V."/>
            <person name="Mobarry C."/>
            <person name="Morris J."/>
            <person name="Moshrefi A."/>
            <person name="Mount S.M."/>
            <person name="Moy M."/>
            <person name="Murphy B."/>
            <person name="Murphy L."/>
            <person name="Muzny D.M."/>
            <person name="Nelson D.L."/>
            <person name="Nelson D.R."/>
            <person name="Nelson K.A."/>
            <person name="Nixon K."/>
            <person name="Nusskern D.R."/>
            <person name="Pacleb J.M."/>
            <person name="Palazzolo M."/>
            <person name="Pittman G.S."/>
            <person name="Pan S."/>
            <person name="Pollard J."/>
            <person name="Puri V."/>
            <person name="Reese M.G."/>
            <person name="Reinert K."/>
            <person name="Remington K."/>
            <person name="Saunders R.D.C."/>
            <person name="Scheeler F."/>
            <person name="Shen H."/>
            <person name="Shue B.C."/>
            <person name="Siden-Kiamos I."/>
            <person name="Simpson M."/>
            <person name="Skupski M.P."/>
            <person name="Smith T.J."/>
            <person name="Spier E."/>
            <person name="Spradling A.C."/>
            <person name="Stapleton M."/>
            <person name="Strong R."/>
            <person name="Sun E."/>
            <person name="Svirskas R."/>
            <person name="Tector C."/>
            <person name="Turner R."/>
            <person name="Venter E."/>
            <person name="Wang A.H."/>
            <person name="Wang X."/>
            <person name="Wang Z.-Y."/>
            <person name="Wassarman D.A."/>
            <person name="Weinstock G.M."/>
            <person name="Weissenbach J."/>
            <person name="Williams S.M."/>
            <person name="Woodage T."/>
            <person name="Worley K.C."/>
            <person name="Wu D."/>
            <person name="Yang S."/>
            <person name="Yao Q.A."/>
            <person name="Ye J."/>
            <person name="Yeh R.-F."/>
            <person name="Zaveri J.S."/>
            <person name="Zhan M."/>
            <person name="Zhang G."/>
            <person name="Zhao Q."/>
            <person name="Zheng L."/>
            <person name="Zheng X.H."/>
            <person name="Zhong F.N."/>
            <person name="Zhong W."/>
            <person name="Zhou X."/>
            <person name="Zhu S.C."/>
            <person name="Zhu X."/>
            <person name="Smith H.O."/>
            <person name="Gibbs R.A."/>
            <person name="Myers E.W."/>
            <person name="Rubin G.M."/>
            <person name="Venter J.C."/>
        </authorList>
    </citation>
    <scope>NUCLEOTIDE SEQUENCE [LARGE SCALE GENOMIC DNA]</scope>
    <source>
        <strain>Berkeley</strain>
    </source>
</reference>
<reference key="2">
    <citation type="journal article" date="2002" name="Genome Biol.">
        <title>Annotation of the Drosophila melanogaster euchromatic genome: a systematic review.</title>
        <authorList>
            <person name="Misra S."/>
            <person name="Crosby M.A."/>
            <person name="Mungall C.J."/>
            <person name="Matthews B.B."/>
            <person name="Campbell K.S."/>
            <person name="Hradecky P."/>
            <person name="Huang Y."/>
            <person name="Kaminker J.S."/>
            <person name="Millburn G.H."/>
            <person name="Prochnik S.E."/>
            <person name="Smith C.D."/>
            <person name="Tupy J.L."/>
            <person name="Whitfield E.J."/>
            <person name="Bayraktaroglu L."/>
            <person name="Berman B.P."/>
            <person name="Bettencourt B.R."/>
            <person name="Celniker S.E."/>
            <person name="de Grey A.D.N.J."/>
            <person name="Drysdale R.A."/>
            <person name="Harris N.L."/>
            <person name="Richter J."/>
            <person name="Russo S."/>
            <person name="Schroeder A.J."/>
            <person name="Shu S.Q."/>
            <person name="Stapleton M."/>
            <person name="Yamada C."/>
            <person name="Ashburner M."/>
            <person name="Gelbart W.M."/>
            <person name="Rubin G.M."/>
            <person name="Lewis S.E."/>
        </authorList>
    </citation>
    <scope>GENOME REANNOTATION</scope>
    <source>
        <strain>Berkeley</strain>
    </source>
</reference>
<proteinExistence type="inferred from homology"/>
<keyword id="KW-1185">Reference proteome</keyword>
<organism>
    <name type="scientific">Drosophila melanogaster</name>
    <name type="common">Fruit fly</name>
    <dbReference type="NCBI Taxonomy" id="7227"/>
    <lineage>
        <taxon>Eukaryota</taxon>
        <taxon>Metazoa</taxon>
        <taxon>Ecdysozoa</taxon>
        <taxon>Arthropoda</taxon>
        <taxon>Hexapoda</taxon>
        <taxon>Insecta</taxon>
        <taxon>Pterygota</taxon>
        <taxon>Neoptera</taxon>
        <taxon>Endopterygota</taxon>
        <taxon>Diptera</taxon>
        <taxon>Brachycera</taxon>
        <taxon>Muscomorpha</taxon>
        <taxon>Ephydroidea</taxon>
        <taxon>Drosophilidae</taxon>
        <taxon>Drosophila</taxon>
        <taxon>Sophophora</taxon>
    </lineage>
</organism>